<comment type="similarity">
    <text evidence="1">Belongs to the papillomaviridae E5 protein family.</text>
</comment>
<reference key="1">
    <citation type="journal article" date="1986" name="J. Virol.">
        <title>Genome organization and nucleotide sequence of human papillomavirus type 33, which is associated with cervical cancer.</title>
        <authorList>
            <person name="Cole S.T."/>
            <person name="Streeck R.E."/>
        </authorList>
    </citation>
    <scope>NUCLEOTIDE SEQUENCE [GENOMIC DNA]</scope>
</reference>
<sequence>MIFVFVLCFILFLCLSLLLRPLILSISTYAWLLVLVLLLWVFVGSPLKIFFCYLLFLYLPMMCINFHAQHMTQQE</sequence>
<keyword id="KW-0244">Early protein</keyword>
<feature type="chain" id="PRO_0000133292" description="Probable protein E5">
    <location>
        <begin position="1"/>
        <end position="75"/>
    </location>
</feature>
<accession>P06426</accession>
<dbReference type="EMBL" id="M12732">
    <property type="protein sequence ID" value="AAA46962.1"/>
    <property type="molecule type" value="Genomic_DNA"/>
</dbReference>
<dbReference type="PIR" id="A03679">
    <property type="entry name" value="W5WL33"/>
</dbReference>
<dbReference type="IntAct" id="P06426">
    <property type="interactions" value="1"/>
</dbReference>
<dbReference type="MINT" id="P06426"/>
<dbReference type="Proteomes" id="UP000009118">
    <property type="component" value="Genome"/>
</dbReference>
<dbReference type="InterPro" id="IPR004270">
    <property type="entry name" value="Papilloma_E5_alpha"/>
</dbReference>
<dbReference type="Pfam" id="PF03025">
    <property type="entry name" value="Papilloma_E5"/>
    <property type="match status" value="1"/>
</dbReference>
<gene>
    <name type="primary">E5</name>
</gene>
<name>VE5_HPV33</name>
<evidence type="ECO:0000305" key="1"/>
<organism>
    <name type="scientific">Human papillomavirus 33</name>
    <dbReference type="NCBI Taxonomy" id="10586"/>
    <lineage>
        <taxon>Viruses</taxon>
        <taxon>Monodnaviria</taxon>
        <taxon>Shotokuvirae</taxon>
        <taxon>Cossaviricota</taxon>
        <taxon>Papovaviricetes</taxon>
        <taxon>Zurhausenvirales</taxon>
        <taxon>Papillomaviridae</taxon>
        <taxon>Firstpapillomavirinae</taxon>
        <taxon>Alphapapillomavirus</taxon>
        <taxon>Alphapapillomavirus 9</taxon>
    </lineage>
</organism>
<protein>
    <recommendedName>
        <fullName>Probable protein E5</fullName>
    </recommendedName>
</protein>
<proteinExistence type="inferred from homology"/>
<organismHost>
    <name type="scientific">Homo sapiens</name>
    <name type="common">Human</name>
    <dbReference type="NCBI Taxonomy" id="9606"/>
</organismHost>